<name>H31_BOVIN</name>
<organism>
    <name type="scientific">Bos taurus</name>
    <name type="common">Bovine</name>
    <dbReference type="NCBI Taxonomy" id="9913"/>
    <lineage>
        <taxon>Eukaryota</taxon>
        <taxon>Metazoa</taxon>
        <taxon>Chordata</taxon>
        <taxon>Craniata</taxon>
        <taxon>Vertebrata</taxon>
        <taxon>Euteleostomi</taxon>
        <taxon>Mammalia</taxon>
        <taxon>Eutheria</taxon>
        <taxon>Laurasiatheria</taxon>
        <taxon>Artiodactyla</taxon>
        <taxon>Ruminantia</taxon>
        <taxon>Pecora</taxon>
        <taxon>Bovidae</taxon>
        <taxon>Bovinae</taxon>
        <taxon>Bos</taxon>
    </lineage>
</organism>
<protein>
    <recommendedName>
        <fullName>Histone H3.1</fullName>
    </recommendedName>
</protein>
<dbReference type="PIR" id="A02624">
    <property type="entry name" value="HSBO3"/>
</dbReference>
<dbReference type="RefSeq" id="NP_001361459.1">
    <property type="nucleotide sequence ID" value="NM_001374530.1"/>
</dbReference>
<dbReference type="RefSeq" id="NP_001361462.1">
    <property type="nucleotide sequence ID" value="NM_001374533.1"/>
</dbReference>
<dbReference type="RefSeq" id="NP_001361465.1">
    <property type="nucleotide sequence ID" value="NM_001374536.1"/>
</dbReference>
<dbReference type="RefSeq" id="NP_001361468.1">
    <property type="nucleotide sequence ID" value="NM_001374539.1"/>
</dbReference>
<dbReference type="RefSeq" id="XP_002697506.1">
    <property type="nucleotide sequence ID" value="XM_002697460.6"/>
</dbReference>
<dbReference type="RefSeq" id="XP_002697575.1">
    <property type="nucleotide sequence ID" value="XM_002697529.4"/>
</dbReference>
<dbReference type="RefSeq" id="XP_005196706.1">
    <property type="nucleotide sequence ID" value="XM_005196649.3"/>
</dbReference>
<dbReference type="RefSeq" id="XP_005223855.1">
    <property type="nucleotide sequence ID" value="XM_005223798.3"/>
</dbReference>
<dbReference type="RefSeq" id="XP_010816767.1">
    <property type="nucleotide sequence ID" value="XM_010818465.4"/>
</dbReference>
<dbReference type="RefSeq" id="XP_010823755.1">
    <property type="nucleotide sequence ID" value="XM_010825453.2"/>
</dbReference>
<dbReference type="RefSeq" id="XP_015315463.1">
    <property type="nucleotide sequence ID" value="XM_015459977.3"/>
</dbReference>
<dbReference type="RefSeq" id="XP_015324501.1">
    <property type="nucleotide sequence ID" value="XM_015469015.1"/>
</dbReference>
<dbReference type="RefSeq" id="XP_015324502.1">
    <property type="nucleotide sequence ID" value="XM_015469016.1"/>
</dbReference>
<dbReference type="RefSeq" id="XP_024839706.1">
    <property type="nucleotide sequence ID" value="XM_024983938.2"/>
</dbReference>
<dbReference type="RefSeq" id="XP_059736714.1">
    <property type="nucleotide sequence ID" value="XM_059880731.1"/>
</dbReference>
<dbReference type="RefSeq" id="XP_874006.1">
    <property type="nucleotide sequence ID" value="XM_868913.4"/>
</dbReference>
<dbReference type="SMR" id="P68432"/>
<dbReference type="BioGRID" id="544398">
    <property type="interactions" value="4"/>
</dbReference>
<dbReference type="FunCoup" id="P68432">
    <property type="interactions" value="1110"/>
</dbReference>
<dbReference type="IntAct" id="P68432">
    <property type="interactions" value="9"/>
</dbReference>
<dbReference type="STRING" id="9913.ENSBTAP00000059273"/>
<dbReference type="iPTMnet" id="P68432"/>
<dbReference type="PaxDb" id="9913-ENSBTAP00000044281"/>
<dbReference type="PeptideAtlas" id="P68432"/>
<dbReference type="Ensembl" id="ENSBTAT00000094340.1">
    <property type="protein sequence ID" value="ENSBTAP00000101889.1"/>
    <property type="gene ID" value="ENSBTAG00000055948.1"/>
</dbReference>
<dbReference type="Ensembl" id="ENSBTAT00000100726.1">
    <property type="protein sequence ID" value="ENSBTAP00000087245.1"/>
    <property type="gene ID" value="ENSBTAG00000063602.1"/>
</dbReference>
<dbReference type="Ensembl" id="ENSBTAT00000108089.1">
    <property type="protein sequence ID" value="ENSBTAP00000085031.1"/>
    <property type="gene ID" value="ENSBTAG00000065619.1"/>
</dbReference>
<dbReference type="GeneID" id="107131750"/>
<dbReference type="GeneID" id="115945165"/>
<dbReference type="GeneID" id="115945167"/>
<dbReference type="GeneID" id="115945169"/>
<dbReference type="GeneID" id="115945171"/>
<dbReference type="GeneID" id="517139"/>
<dbReference type="GeneID" id="616800"/>
<dbReference type="GeneID" id="616819"/>
<dbReference type="GeneID" id="788250"/>
<dbReference type="KEGG" id="bta:107131750"/>
<dbReference type="KEGG" id="bta:616800"/>
<dbReference type="KEGG" id="bta:616819"/>
<dbReference type="CTD" id="8356"/>
<dbReference type="CTD" id="8357"/>
<dbReference type="VEuPathDB" id="HostDB:ENSBTAG00000048478"/>
<dbReference type="VEuPathDB" id="HostDB:ENSBTAG00000048666"/>
<dbReference type="VEuPathDB" id="HostDB:ENSBTAG00000050102"/>
<dbReference type="VEuPathDB" id="HostDB:ENSBTAG00000050209"/>
<dbReference type="VEuPathDB" id="HostDB:ENSBTAG00000050477"/>
<dbReference type="VEuPathDB" id="HostDB:ENSBTAG00000054582"/>
<dbReference type="eggNOG" id="KOG1745">
    <property type="taxonomic scope" value="Eukaryota"/>
</dbReference>
<dbReference type="GeneTree" id="ENSGT01130000278271"/>
<dbReference type="HOGENOM" id="CLU_078295_4_0_1"/>
<dbReference type="InParanoid" id="P68432"/>
<dbReference type="OMA" id="VHTNIFR"/>
<dbReference type="OrthoDB" id="9679735at2759"/>
<dbReference type="TreeFam" id="TF314241"/>
<dbReference type="Reactome" id="R-BTA-1266695">
    <property type="pathway name" value="Interleukin-7 signaling"/>
</dbReference>
<dbReference type="Reactome" id="R-BTA-201722">
    <property type="pathway name" value="Formation of the beta-catenin:TCF transactivating complex"/>
</dbReference>
<dbReference type="Reactome" id="R-BTA-212300">
    <property type="pathway name" value="PRC2 methylates histones and DNA"/>
</dbReference>
<dbReference type="Reactome" id="R-BTA-2299718">
    <property type="pathway name" value="Condensation of Prophase Chromosomes"/>
</dbReference>
<dbReference type="Reactome" id="R-BTA-2559580">
    <property type="pathway name" value="Oxidative Stress Induced Senescence"/>
</dbReference>
<dbReference type="Reactome" id="R-BTA-2559582">
    <property type="pathway name" value="Senescence-Associated Secretory Phenotype (SASP)"/>
</dbReference>
<dbReference type="Reactome" id="R-BTA-3214815">
    <property type="pathway name" value="HDACs deacetylate histones"/>
</dbReference>
<dbReference type="Reactome" id="R-BTA-3214841">
    <property type="pathway name" value="PKMTs methylate histone lysines"/>
</dbReference>
<dbReference type="Reactome" id="R-BTA-3214842">
    <property type="pathway name" value="HDMs demethylate histones"/>
</dbReference>
<dbReference type="Reactome" id="R-BTA-3214847">
    <property type="pathway name" value="HATs acetylate histones"/>
</dbReference>
<dbReference type="Reactome" id="R-BTA-3214858">
    <property type="pathway name" value="RMTs methylate histone arginines"/>
</dbReference>
<dbReference type="Reactome" id="R-BTA-3247509">
    <property type="pathway name" value="Chromatin modifying enzymes"/>
</dbReference>
<dbReference type="Reactome" id="R-BTA-427359">
    <property type="pathway name" value="SIRT1 negatively regulates rRNA expression"/>
</dbReference>
<dbReference type="Reactome" id="R-BTA-427413">
    <property type="pathway name" value="NoRC negatively regulates rRNA expression"/>
</dbReference>
<dbReference type="Reactome" id="R-BTA-5250924">
    <property type="pathway name" value="B-WICH complex positively regulates rRNA expression"/>
</dbReference>
<dbReference type="Reactome" id="R-BTA-5578749">
    <property type="pathway name" value="Transcriptional regulation by small RNAs"/>
</dbReference>
<dbReference type="Reactome" id="R-BTA-5625886">
    <property type="pathway name" value="Activated PKN1 stimulates transcription of AR (androgen receptor) regulated genes KLK2 and KLK3"/>
</dbReference>
<dbReference type="Reactome" id="R-BTA-68616">
    <property type="pathway name" value="Assembly of the ORC complex at the origin of replication"/>
</dbReference>
<dbReference type="Reactome" id="R-BTA-73728">
    <property type="pathway name" value="RNA Polymerase I Promoter Opening"/>
</dbReference>
<dbReference type="Reactome" id="R-BTA-73772">
    <property type="pathway name" value="RNA Polymerase I Promoter Escape"/>
</dbReference>
<dbReference type="Reactome" id="R-BTA-8936459">
    <property type="pathway name" value="RUNX1 regulates genes involved in megakaryocyte differentiation and platelet function"/>
</dbReference>
<dbReference type="Reactome" id="R-BTA-9018519">
    <property type="pathway name" value="Estrogen-dependent gene expression"/>
</dbReference>
<dbReference type="Reactome" id="R-BTA-983231">
    <property type="pathway name" value="Factors involved in megakaryocyte development and platelet production"/>
</dbReference>
<dbReference type="Reactome" id="R-BTA-9841922">
    <property type="pathway name" value="MLL4 and MLL3 complexes regulate expression of PPARG target genes in adipogenesis and hepatic steatosis"/>
</dbReference>
<dbReference type="Reactome" id="R-BTA-9843940">
    <property type="pathway name" value="Regulation of endogenous retroelements by KRAB-ZFP proteins"/>
</dbReference>
<dbReference type="Reactome" id="R-BTA-9843970">
    <property type="pathway name" value="Regulation of endogenous retroelements by the Human Silencing Hub (HUSH) complex"/>
</dbReference>
<dbReference type="Proteomes" id="UP000009136">
    <property type="component" value="Chromosome 23"/>
</dbReference>
<dbReference type="Bgee" id="ENSBTAG00000048478">
    <property type="expression patterns" value="Expressed in spiral colon and 77 other cell types or tissues"/>
</dbReference>
<dbReference type="GO" id="GO:0000786">
    <property type="term" value="C:nucleosome"/>
    <property type="evidence" value="ECO:0007669"/>
    <property type="project" value="UniProtKB-KW"/>
</dbReference>
<dbReference type="GO" id="GO:0005634">
    <property type="term" value="C:nucleus"/>
    <property type="evidence" value="ECO:0000250"/>
    <property type="project" value="UniProtKB"/>
</dbReference>
<dbReference type="GO" id="GO:0003677">
    <property type="term" value="F:DNA binding"/>
    <property type="evidence" value="ECO:0007669"/>
    <property type="project" value="UniProtKB-KW"/>
</dbReference>
<dbReference type="GO" id="GO:0046982">
    <property type="term" value="F:protein heterodimerization activity"/>
    <property type="evidence" value="ECO:0007669"/>
    <property type="project" value="InterPro"/>
</dbReference>
<dbReference type="GO" id="GO:0030527">
    <property type="term" value="F:structural constituent of chromatin"/>
    <property type="evidence" value="ECO:0007669"/>
    <property type="project" value="InterPro"/>
</dbReference>
<dbReference type="CDD" id="cd22911">
    <property type="entry name" value="HFD_H3"/>
    <property type="match status" value="1"/>
</dbReference>
<dbReference type="FunFam" id="1.10.20.10:FF:000078">
    <property type="entry name" value="Histone H3"/>
    <property type="match status" value="1"/>
</dbReference>
<dbReference type="FunFam" id="1.10.20.10:FF:000044">
    <property type="entry name" value="Histone H3.3"/>
    <property type="match status" value="1"/>
</dbReference>
<dbReference type="Gene3D" id="1.10.20.10">
    <property type="entry name" value="Histone, subunit A"/>
    <property type="match status" value="1"/>
</dbReference>
<dbReference type="InterPro" id="IPR009072">
    <property type="entry name" value="Histone-fold"/>
</dbReference>
<dbReference type="InterPro" id="IPR007125">
    <property type="entry name" value="Histone_H2A/H2B/H3"/>
</dbReference>
<dbReference type="InterPro" id="IPR000164">
    <property type="entry name" value="Histone_H3/CENP-A"/>
</dbReference>
<dbReference type="PANTHER" id="PTHR11426">
    <property type="entry name" value="HISTONE H3"/>
    <property type="match status" value="1"/>
</dbReference>
<dbReference type="Pfam" id="PF00125">
    <property type="entry name" value="Histone"/>
    <property type="match status" value="1"/>
</dbReference>
<dbReference type="PRINTS" id="PR00622">
    <property type="entry name" value="HISTONEH3"/>
</dbReference>
<dbReference type="SMART" id="SM00428">
    <property type="entry name" value="H3"/>
    <property type="match status" value="1"/>
</dbReference>
<dbReference type="SUPFAM" id="SSF47113">
    <property type="entry name" value="Histone-fold"/>
    <property type="match status" value="1"/>
</dbReference>
<dbReference type="PROSITE" id="PS00322">
    <property type="entry name" value="HISTONE_H3_1"/>
    <property type="match status" value="1"/>
</dbReference>
<dbReference type="PROSITE" id="PS00959">
    <property type="entry name" value="HISTONE_H3_2"/>
    <property type="match status" value="1"/>
</dbReference>
<keyword id="KW-0007">Acetylation</keyword>
<keyword id="KW-0013">ADP-ribosylation</keyword>
<keyword id="KW-0158">Chromosome</keyword>
<keyword id="KW-0164">Citrullination</keyword>
<keyword id="KW-0903">Direct protein sequencing</keyword>
<keyword id="KW-0238">DNA-binding</keyword>
<keyword id="KW-0379">Hydroxylation</keyword>
<keyword id="KW-0449">Lipoprotein</keyword>
<keyword id="KW-0488">Methylation</keyword>
<keyword id="KW-0544">Nucleosome core</keyword>
<keyword id="KW-0539">Nucleus</keyword>
<keyword id="KW-0597">Phosphoprotein</keyword>
<keyword id="KW-1185">Reference proteome</keyword>
<keyword id="KW-0832">Ubl conjugation</keyword>
<reference key="1">
    <citation type="journal article" date="1973" name="J. Biol. Chem.">
        <title>Histone 3. 3. Sequence studies on the cyanogen bromide peptides; complete amino acid sequence of calf thymus histone 3.</title>
        <authorList>
            <person name="Delange R.J."/>
            <person name="Hooper J.A."/>
            <person name="Smith E.L."/>
        </authorList>
    </citation>
    <scope>PROTEIN SEQUENCE OF 2-136</scope>
    <scope>CLEAVAGE OF INITIATOR METHIONINE</scope>
    <scope>ACETYLATION AT LYS-15 AND LYS-24</scope>
    <scope>METHYLATION AT LYS-10 AND LYS-28</scope>
    <source>
        <tissue>Thymus</tissue>
    </source>
</reference>
<reference key="2">
    <citation type="journal article" date="1975" name="J. Biol. Chem.">
        <title>Histone III. VI. Two forms of calf thymus histone III.</title>
        <authorList>
            <person name="Patthy L."/>
            <person name="Smith E.L."/>
        </authorList>
    </citation>
    <scope>PROTEIN SEQUENCE OF 2-136</scope>
    <scope>CLEAVAGE OF INITIATOR METHIONINE</scope>
    <source>
        <tissue>Thymus</tissue>
    </source>
</reference>
<reference key="3">
    <citation type="journal article" date="1973" name="J. Biol. Chem.">
        <title>Histone 3. I. Isolation and sequences of the tryptic peptides from the maleylated calf thymus protein.</title>
        <authorList>
            <person name="Delange R.J."/>
            <person name="Smith E.L."/>
        </authorList>
    </citation>
    <scope>PARTIAL PROTEIN SEQUENCE</scope>
    <source>
        <tissue>Thymus</tissue>
    </source>
</reference>
<reference key="4">
    <citation type="journal article" date="1973" name="J. Biol. Chem.">
        <title>Histone 3. II. Isolation and sequences of chymotryptic peptides from calf thymus histone 3.</title>
        <authorList>
            <person name="Hooper J.A."/>
            <person name="Smith E.L."/>
        </authorList>
    </citation>
    <scope>PARTIAL PROTEIN SEQUENCE</scope>
    <source>
        <tissue>Thymus</tissue>
    </source>
</reference>
<reference key="5">
    <citation type="journal article" date="1999" name="J. Biol. Chem.">
        <title>Identification of a novel phosphorylation site on histone H3 coupled with mitotic chromosome condensation.</title>
        <authorList>
            <person name="Goto H."/>
            <person name="Tomono Y."/>
            <person name="Ajiro K."/>
            <person name="Kosako H."/>
            <person name="Fujita M."/>
            <person name="Sakurai M."/>
            <person name="Okawa K."/>
            <person name="Iwamatsu A."/>
            <person name="Okigaki T."/>
            <person name="Takahashi T."/>
            <person name="Inagaki M."/>
        </authorList>
    </citation>
    <scope>PHOSPHORYLATION AT SER-11 AND SER-29</scope>
</reference>
<accession>P68432</accession>
<accession>P02295</accession>
<accession>P02296</accession>
<accession>P16106</accession>
<evidence type="ECO:0000250" key="1"/>
<evidence type="ECO:0000250" key="2">
    <source>
        <dbReference type="UniProtKB" id="P68431"/>
    </source>
</evidence>
<evidence type="ECO:0000250" key="3">
    <source>
        <dbReference type="UniProtKB" id="P68433"/>
    </source>
</evidence>
<evidence type="ECO:0000250" key="4">
    <source>
        <dbReference type="UniProtKB" id="P84243"/>
    </source>
</evidence>
<evidence type="ECO:0000250" key="5">
    <source>
        <dbReference type="UniProtKB" id="Q6LED0"/>
    </source>
</evidence>
<evidence type="ECO:0000250" key="6">
    <source>
        <dbReference type="UniProtKB" id="Q71DI3"/>
    </source>
</evidence>
<evidence type="ECO:0000256" key="7">
    <source>
        <dbReference type="SAM" id="MobiDB-lite"/>
    </source>
</evidence>
<evidence type="ECO:0000269" key="8">
    <source>
    </source>
</evidence>
<evidence type="ECO:0000269" key="9">
    <source>
    </source>
</evidence>
<evidence type="ECO:0000269" key="10">
    <source>
    </source>
</evidence>
<evidence type="ECO:0000305" key="11"/>
<evidence type="ECO:0000305" key="12">
    <source>
    </source>
</evidence>
<feature type="initiator methionine" description="Removed" evidence="9 10">
    <location>
        <position position="1"/>
    </location>
</feature>
<feature type="chain" id="PRO_0000221256" description="Histone H3.1">
    <location>
        <begin position="2"/>
        <end position="136"/>
    </location>
</feature>
<feature type="region of interest" description="Disordered" evidence="7">
    <location>
        <begin position="1"/>
        <end position="43"/>
    </location>
</feature>
<feature type="modified residue" description="Asymmetric dimethylarginine; by PRMT6; alternate" evidence="2">
    <location>
        <position position="3"/>
    </location>
</feature>
<feature type="modified residue" description="Citrulline; alternate" evidence="2">
    <location>
        <position position="3"/>
    </location>
</feature>
<feature type="modified residue" description="Phosphothreonine; by HASPIN and VRK1" evidence="2">
    <location>
        <position position="4"/>
    </location>
</feature>
<feature type="modified residue" description="Allysine; alternate" evidence="2">
    <location>
        <position position="5"/>
    </location>
</feature>
<feature type="modified residue" description="N6,N6,N6-trimethyllysine; alternate" evidence="2">
    <location>
        <position position="5"/>
    </location>
</feature>
<feature type="modified residue" description="N6,N6-dimethyllysine; alternate" evidence="2">
    <location>
        <position position="5"/>
    </location>
</feature>
<feature type="modified residue" description="N6-(2-hydroxyisobutyryl)lysine; alternate" evidence="2">
    <location>
        <position position="5"/>
    </location>
</feature>
<feature type="modified residue" description="N6-(beta-hydroxybutyryl)lysine; alternate" evidence="3">
    <location>
        <position position="5"/>
    </location>
</feature>
<feature type="modified residue" description="N6-acetyllysine; alternate" evidence="2">
    <location>
        <position position="5"/>
    </location>
</feature>
<feature type="modified residue" description="N6-crotonyllysine; alternate" evidence="2">
    <location>
        <position position="5"/>
    </location>
</feature>
<feature type="modified residue" description="N6-methyllysine; alternate" evidence="2">
    <location>
        <position position="5"/>
    </location>
</feature>
<feature type="modified residue" description="5-glutamyl dopamine; alternate" evidence="2">
    <location>
        <position position="6"/>
    </location>
</feature>
<feature type="modified residue" description="5-glutamyl serotonin; alternate" evidence="2">
    <location>
        <position position="6"/>
    </location>
</feature>
<feature type="modified residue" description="Phosphothreonine; by PKC" evidence="2">
    <location>
        <position position="7"/>
    </location>
</feature>
<feature type="modified residue" description="Citrulline; alternate" evidence="2">
    <location>
        <position position="9"/>
    </location>
</feature>
<feature type="modified residue" description="Symmetric dimethylarginine; by PRMT5; alternate" evidence="3">
    <location>
        <position position="9"/>
    </location>
</feature>
<feature type="modified residue" description="N6,N6,N6-trimethyllysine; alternate" evidence="10">
    <location>
        <position position="10"/>
    </location>
</feature>
<feature type="modified residue" description="N6,N6-dimethyllysine; alternate" evidence="10">
    <location>
        <position position="10"/>
    </location>
</feature>
<feature type="modified residue" description="N6-(2-hydroxyisobutyryl)lysine; alternate" evidence="2">
    <location>
        <position position="10"/>
    </location>
</feature>
<feature type="modified residue" description="N6-(beta-hydroxybutyryl)lysine; alternate" evidence="3">
    <location>
        <position position="10"/>
    </location>
</feature>
<feature type="modified residue" description="N6-acetyllysine; alternate" evidence="2">
    <location>
        <position position="10"/>
    </location>
</feature>
<feature type="modified residue" description="N6-crotonyllysine; alternate" evidence="2">
    <location>
        <position position="10"/>
    </location>
</feature>
<feature type="modified residue" description="N6-lactoyllysine; alternate" evidence="2">
    <location>
        <position position="10"/>
    </location>
</feature>
<feature type="modified residue" description="N6-methyllysine; alternate" evidence="10">
    <location>
        <position position="10"/>
    </location>
</feature>
<feature type="modified residue" description="ADP-ribosylserine; alternate" evidence="2">
    <location>
        <position position="11"/>
    </location>
</feature>
<feature type="modified residue" description="Phosphoserine; alternate; by AURKB, AURKC, RPS6KA3, RPS6KA4 and RPS6KA5" evidence="8">
    <location>
        <position position="11"/>
    </location>
</feature>
<feature type="modified residue" description="Phosphothreonine; by PKC and CHEK1" evidence="2">
    <location>
        <position position="12"/>
    </location>
</feature>
<feature type="modified residue" description="N6-(2-hydroxyisobutyryl)lysine; alternate" evidence="2">
    <location>
        <position position="15"/>
    </location>
</feature>
<feature type="modified residue" description="N6-(beta-hydroxybutyryl)lysine; alternate" evidence="3">
    <location>
        <position position="15"/>
    </location>
</feature>
<feature type="modified residue" description="N6-acetyllysine; alternate" evidence="10">
    <location>
        <position position="15"/>
    </location>
</feature>
<feature type="modified residue" description="N6-glutaryllysine; alternate" evidence="2">
    <location>
        <position position="15"/>
    </location>
</feature>
<feature type="modified residue" description="N6-lactoyllysine; alternate" evidence="3">
    <location>
        <position position="15"/>
    </location>
</feature>
<feature type="modified residue" description="N6-succinyllysine; alternate" evidence="2">
    <location>
        <position position="15"/>
    </location>
</feature>
<feature type="modified residue" description="Asymmetric dimethylarginine; by CARM1; alternate" evidence="2">
    <location>
        <position position="18"/>
    </location>
</feature>
<feature type="modified residue" description="Citrulline; alternate" evidence="1">
    <location>
        <position position="18"/>
    </location>
</feature>
<feature type="modified residue" description="N6-(2-hydroxyisobutyryl)lysine; alternate" evidence="2">
    <location>
        <position position="19"/>
    </location>
</feature>
<feature type="modified residue" description="N6-(beta-hydroxybutyryl)lysine; alternate" evidence="3">
    <location>
        <position position="19"/>
    </location>
</feature>
<feature type="modified residue" description="N6-acetyllysine; alternate" evidence="2">
    <location>
        <position position="19"/>
    </location>
</feature>
<feature type="modified residue" description="N6-butyryllysine; alternate" evidence="3">
    <location>
        <position position="19"/>
    </location>
</feature>
<feature type="modified residue" description="N6-crotonyllysine; alternate" evidence="2">
    <location>
        <position position="19"/>
    </location>
</feature>
<feature type="modified residue" description="N6-glutaryllysine; alternate" evidence="2">
    <location>
        <position position="19"/>
    </location>
</feature>
<feature type="modified residue" description="N6-lactoyllysine; alternate" evidence="2">
    <location>
        <position position="19"/>
    </location>
</feature>
<feature type="modified residue" description="N6-methyllysine; alternate" evidence="2">
    <location>
        <position position="19"/>
    </location>
</feature>
<feature type="modified residue" description="N6-(2-hydroxyisobutyryl)lysine; alternate" evidence="2">
    <location>
        <position position="24"/>
    </location>
</feature>
<feature type="modified residue" description="N6-(beta-hydroxybutyryl)lysine; alternate" evidence="3">
    <location>
        <position position="24"/>
    </location>
</feature>
<feature type="modified residue" description="N6-acetyllysine; alternate" evidence="10">
    <location>
        <position position="24"/>
    </location>
</feature>
<feature type="modified residue" description="N6-butyryllysine; alternate" evidence="3">
    <location>
        <position position="24"/>
    </location>
</feature>
<feature type="modified residue" description="N6-crotonyllysine; alternate" evidence="2">
    <location>
        <position position="24"/>
    </location>
</feature>
<feature type="modified residue" description="N6-glutaryllysine; alternate" evidence="2">
    <location>
        <position position="24"/>
    </location>
</feature>
<feature type="modified residue" description="N6-lactoyllysine; alternate" evidence="2">
    <location>
        <position position="24"/>
    </location>
</feature>
<feature type="modified residue" description="N6-methyllysine; alternate" evidence="2">
    <location>
        <position position="24"/>
    </location>
</feature>
<feature type="modified residue" description="Citrulline" evidence="1">
    <location>
        <position position="27"/>
    </location>
</feature>
<feature type="modified residue" description="N6,N6,N6-trimethyllysine; alternate" evidence="10">
    <location>
        <position position="28"/>
    </location>
</feature>
<feature type="modified residue" description="N6,N6-dimethyllysine; alternate" evidence="10">
    <location>
        <position position="28"/>
    </location>
</feature>
<feature type="modified residue" description="N6-(2-hydroxyisobutyryl)lysine; alternate" evidence="2">
    <location>
        <position position="28"/>
    </location>
</feature>
<feature type="modified residue" description="N6-acetyllysine; alternate" evidence="2">
    <location>
        <position position="28"/>
    </location>
</feature>
<feature type="modified residue" description="N6-crotonyllysine; alternate" evidence="2">
    <location>
        <position position="28"/>
    </location>
</feature>
<feature type="modified residue" description="N6-glutaryllysine; alternate" evidence="2">
    <location>
        <position position="28"/>
    </location>
</feature>
<feature type="modified residue" description="N6-lactoyllysine; alternate" evidence="2">
    <location>
        <position position="28"/>
    </location>
</feature>
<feature type="modified residue" description="N6-methyllysine; alternate" evidence="10">
    <location>
        <position position="28"/>
    </location>
</feature>
<feature type="modified residue" description="ADP-ribosylserine; alternate" evidence="2">
    <location>
        <position position="29"/>
    </location>
</feature>
<feature type="modified residue" description="Phosphoserine; alternate; by AURKB, AURKC and RPS6KA5" evidence="8">
    <location>
        <position position="29"/>
    </location>
</feature>
<feature type="modified residue" description="N6,N6,N6-trimethyllysine; alternate" evidence="2">
    <location>
        <position position="37"/>
    </location>
</feature>
<feature type="modified residue" description="N6,N6-dimethyllysine; alternate" evidence="2">
    <location>
        <position position="37"/>
    </location>
</feature>
<feature type="modified residue" description="N6-(2-hydroxyisobutyryl)lysine; alternate" evidence="2">
    <location>
        <position position="37"/>
    </location>
</feature>
<feature type="modified residue" description="N6-acetyllysine; alternate" evidence="2">
    <location>
        <position position="37"/>
    </location>
</feature>
<feature type="modified residue" description="N6-methyllysine; alternate" evidence="2">
    <location>
        <position position="37"/>
    </location>
</feature>
<feature type="modified residue" description="N6-methyllysine" evidence="2">
    <location>
        <position position="38"/>
    </location>
</feature>
<feature type="modified residue" description="Phosphotyrosine" evidence="2">
    <location>
        <position position="42"/>
    </location>
</feature>
<feature type="modified residue" description="N6,N6,N6-trimethyllysine; alternate" evidence="2">
    <location>
        <position position="57"/>
    </location>
</feature>
<feature type="modified residue" description="N6-(2-hydroxyisobutyryl)lysine; alternate" evidence="2">
    <location>
        <position position="57"/>
    </location>
</feature>
<feature type="modified residue" description="N6-(beta-hydroxybutyryl)lysine; alternate" evidence="3">
    <location>
        <position position="57"/>
    </location>
</feature>
<feature type="modified residue" description="N6-acetyllysine; alternate" evidence="2">
    <location>
        <position position="57"/>
    </location>
</feature>
<feature type="modified residue" description="N6-crotonyllysine; alternate" evidence="1">
    <location>
        <position position="57"/>
    </location>
</feature>
<feature type="modified residue" description="N6-glutaryllysine; alternate" evidence="2">
    <location>
        <position position="57"/>
    </location>
</feature>
<feature type="modified residue" description="N6-lactoyllysine; alternate" evidence="3">
    <location>
        <position position="57"/>
    </location>
</feature>
<feature type="modified residue" description="N6-methyllysine; by EHMT2; alternate" evidence="2">
    <location>
        <position position="57"/>
    </location>
</feature>
<feature type="modified residue" description="N6-succinyllysine; alternate" evidence="2">
    <location>
        <position position="57"/>
    </location>
</feature>
<feature type="modified residue" description="Phosphoserine" evidence="2">
    <location>
        <position position="58"/>
    </location>
</feature>
<feature type="modified residue" description="N6-(2-hydroxyisobutyryl)lysine; alternate" evidence="2">
    <location>
        <position position="65"/>
    </location>
</feature>
<feature type="modified residue" description="N6-methyllysine; alternate" evidence="2">
    <location>
        <position position="65"/>
    </location>
</feature>
<feature type="modified residue" description="N6,N6,N6-trimethyllysine; alternate" evidence="3">
    <location>
        <position position="80"/>
    </location>
</feature>
<feature type="modified residue" description="N6,N6-dimethyllysine; alternate" evidence="2">
    <location>
        <position position="80"/>
    </location>
</feature>
<feature type="modified residue" description="N6-(2-hydroxyisobutyryl)lysine; alternate" evidence="2">
    <location>
        <position position="80"/>
    </location>
</feature>
<feature type="modified residue" description="N6-acetyllysine; alternate" evidence="2">
    <location>
        <position position="80"/>
    </location>
</feature>
<feature type="modified residue" description="N6-glutaryllysine; alternate" evidence="2">
    <location>
        <position position="80"/>
    </location>
</feature>
<feature type="modified residue" description="N6-lactoyllysine; alternate" evidence="2">
    <location>
        <position position="80"/>
    </location>
</feature>
<feature type="modified residue" description="N6-methyllysine; alternate" evidence="2">
    <location>
        <position position="80"/>
    </location>
</feature>
<feature type="modified residue" description="N6-succinyllysine; alternate" evidence="2">
    <location>
        <position position="80"/>
    </location>
</feature>
<feature type="modified residue" description="Phosphothreonine" evidence="2">
    <location>
        <position position="81"/>
    </location>
</feature>
<feature type="modified residue" description="Phosphoserine" evidence="4">
    <location>
        <position position="87"/>
    </location>
</feature>
<feature type="modified residue" description="Phosphothreonine" evidence="6">
    <location>
        <position position="108"/>
    </location>
</feature>
<feature type="modified residue" description="N6-acetyllysine; alternate" evidence="2">
    <location>
        <position position="116"/>
    </location>
</feature>
<feature type="modified residue" description="N6-glutaryllysine; alternate" evidence="2">
    <location>
        <position position="116"/>
    </location>
</feature>
<feature type="modified residue" description="N6-(2-hydroxyisobutyryl)lysine; alternate" evidence="2">
    <location>
        <position position="123"/>
    </location>
</feature>
<feature type="modified residue" description="N6-acetyllysine; alternate" evidence="2">
    <location>
        <position position="123"/>
    </location>
</feature>
<feature type="modified residue" description="N6-glutaryllysine; alternate" evidence="2">
    <location>
        <position position="123"/>
    </location>
</feature>
<feature type="modified residue" description="N6-methyllysine; alternate" evidence="2">
    <location>
        <position position="123"/>
    </location>
</feature>
<feature type="modified residue" description="N6-succinyllysine; alternate" evidence="2">
    <location>
        <position position="123"/>
    </location>
</feature>
<feature type="lipid moiety-binding region" description="N6-decanoyllysine" evidence="2">
    <location>
        <position position="19"/>
    </location>
</feature>
<comment type="function">
    <text>Core component of nucleosome. Nucleosomes wrap and compact DNA into chromatin, limiting DNA accessibility to the cellular machineries which require DNA as a template. Histones thereby play a central role in transcription regulation, DNA repair, DNA replication and chromosomal stability. DNA accessibility is regulated via a complex set of post-translational modifications of histones, also called histone code, and nucleosome remodeling.</text>
</comment>
<comment type="subunit">
    <text evidence="2">The nucleosome is a histone octamer containing two molecules each of H2A, H2B, H3 and H4 assembled in one H3-H4 heterotetramer and two H2A-H2B heterodimers. The octamer wraps approximately 147 bp of DNA. Interacts with TONSL; CHAF1A; CHAF1B; MCM2 and DNAJC9 (By similarity). Interacts with NASP; NASP is a histone chaperone that stabilizes and maintains a soluble pool of Histone H3-H4 dimers (By similarity).</text>
</comment>
<comment type="interaction">
    <interactant intactId="EBI-79764">
        <id>P68432</id>
    </interactant>
    <interactant intactId="EBI-349968">
        <id>O43463</id>
        <label>SUV39H1</label>
    </interactant>
    <organismsDiffer>true</organismsDiffer>
    <experiments>2</experiments>
</comment>
<comment type="subcellular location">
    <subcellularLocation>
        <location>Nucleus</location>
    </subcellularLocation>
    <subcellularLocation>
        <location>Chromosome</location>
    </subcellularLocation>
</comment>
<comment type="developmental stage">
    <text>Expressed during S phase, then expression strongly decreases as cell division slows down during the process of differentiation.</text>
</comment>
<comment type="PTM">
    <text evidence="2">Acetylation is generally linked to gene activation. Acetylation on Lys-10 (H3K9ac) impairs methylation at Arg-9 (H3R8me2s). Acetylation on Lys-19 (H3K18ac) and Lys-24 (H3K24ac) favors methylation at Arg-18 (H3R17me). Acetylation at Lys-123 (H3K122ac) by EP300/p300 plays a central role in chromatin structure: localizes at the surface of the histone octamer and stimulates transcription, possibly by promoting nucleosome instability.</text>
</comment>
<comment type="PTM">
    <text evidence="2">Citrullination at Arg-9 (H3R8ci) and/or Arg-18 (H3R17ci) by PADI4 impairs methylation and represses transcription.</text>
</comment>
<comment type="PTM">
    <text evidence="2">Asymmetric dimethylation at Arg-18 (H3R17me2a) by CARM1 is linked to gene activation. Symmetric dimethylation at Arg-9 (H3R8me2s) by PRMT5 is linked to gene repression. Asymmetric dimethylation at Arg-3 (H3R2me2a) by PRMT6 is linked to gene repression and is mutually exclusive with H3 Lys-5 methylation (H3K4me2 and H3K4me3). H3R2me2a is present at the 3' of genes regardless of their transcription state and is enriched on inactive promoters, while it is absent on active promoters.</text>
</comment>
<comment type="PTM">
    <text evidence="2">Methylation at Lys-5 (H3K4me), Lys-37 (H3K36me) and Lys-80 (H3K79me) are linked to gene activation. Methylation at Lys-5 (H3K4me) facilitates subsequent acetylation of H3 and H4. Methylation at Lys-80 (H3K79me) is associated with DNA double-strand break (DSB) responses and is a specific target for TP53BP1. Methylation at Lys-10 (H3K9me) and Lys-28 (H3K27me) are linked to gene repression. Methylation at Lys-10 (H3K9me) is a specific target for HP1 proteins (CBX1, CBX3 and CBX5) and prevents subsequent phosphorylation at Ser-11 (H3S10ph) and acetylation of H3 and H4. Methylation at Lys-5 (H3K4me) and Lys-80 (H3K79me) require preliminary monoubiquitination of H2B at 'Lys-120'. Methylation at Lys-10 (H3K9me) and Lys-28 (H3K27me) are enriched in inactive X chromosome chromatin. Monomethylation at Lys-57 (H3K56me1) by EHMT2/G9A in G1 phase promotes interaction with PCNA and is required for DNA replication.</text>
</comment>
<comment type="PTM">
    <text evidence="2">Phosphorylated at Thr-4 (H3T3ph) by VRK1. Phosphorylated at Thr-4 (H3T3ph) by HASPIN during prophase and dephosphorylated during anaphase. Phosphorylation at Ser-11 (H3S10ph) by AURKB is crucial for chromosome condensation and cell-cycle progression during mitosis and meiosis. In addition phosphorylation at Ser-11 (H3S10ph) by RPS6KA4 and RPS6KA5 is important during interphase because it enables the transcription of genes following external stimulation, like mitogens, stress, growth factors or UV irradiation and result in the activation of genes, such as c-fos and c-jun. Phosphorylation at Ser-11 (H3S10ph), which is linked to gene activation, prevents methylation at Lys-10 (H3K9me) but facilitates acetylation of H3 and H4. Phosphorylation at Ser-11 (H3S10ph) by AURKB mediates the dissociation of HP1 proteins (CBX1, CBX3 and CBX5) from heterochromatin. Phosphorylation at Ser-11 (H3S10ph) is also an essential regulatory mechanism for neoplastic cell transformation. Phosphorylated at Ser-29 (H3S28ph) by MAP3K20 isoform 1, RPS6KA5 or AURKB during mitosis or upon ultraviolet B irradiation. Phosphorylation at Thr-7 (H3T6ph) by PRKCB is a specific tag for epigenetic transcriptional activation that prevents demethylation of Lys-5 (H3K4me) by LSD1/KDM1A. At centromeres, specifically phosphorylated at Thr-12 (H3T11ph) from prophase to early anaphase, by DAPK3 and PKN1. Phosphorylation at Thr-12 (H3T11ph) by PKN1 or isoform M2 of PKM (PKM2) is a specific tag for epigenetic transcriptional activation that promotes demethylation of Lys-10 (H3K9me) by KDM4C/JMJD2C. Phosphorylation at Thr-12 (H3T11ph) by chromatin-associated CHEK1 regulates the transcription of cell cycle regulatory genes by modulating acetylation of Lys-10 (H3K9ac). Phosphorylation at Tyr-42 (H3Y41ph) by JAK2 promotes exclusion of CBX5 (HP1 alpha) from chromatin.</text>
</comment>
<comment type="PTM">
    <text evidence="1 2">Monoubiquitinated by RAG1 in lymphoid cells, monoubiquitination is required for V(D)J recombination (By similarity). Ubiquitinated by the CUL4-DDB-RBX1 complex in response to ultraviolet irradiation. This may weaken the interaction between histones and DNA and facilitate DNA accessibility to repair proteins (By similarity).</text>
</comment>
<comment type="PTM">
    <text evidence="2">Lysine deamination at Lys-5 (H3K4all) to form allysine is mediated by LOXL2. Allysine formation by LOXL2 only takes place on H3K4me3 and results in gene repression.</text>
</comment>
<comment type="PTM">
    <text evidence="2">Crotonylation (Kcr) is specifically present in male germ cells and marks testis-specific genes in post-meiotic cells, including X-linked genes that escape sex chromosome inactivation in haploid cells. Crotonylation marks active promoters and enhancers and confers resistance to transcriptional repressors. It is also associated with post-meiotically activated genes on autosomes.</text>
</comment>
<comment type="PTM">
    <text evidence="3">Butyrylation of histones marks active promoters and competes with histone acetylation. It is present during late spermatogenesis.</text>
</comment>
<comment type="PTM">
    <text evidence="2">Succinylation at Lys-80 (H3K79succ) by KAT2A takes place with a maximum frequency around the transcription start sites of genes. It gives a specific tag for epigenetic transcription activation. Desuccinylation at Lys-123 (H3K122succ) by SIRT7 in response to DNA damage promotes chromatin condensation and double-strand breaks (DSBs) repair.</text>
</comment>
<comment type="PTM">
    <text evidence="2">Serine ADP-ribosylation by PARP1 or PARP2 constitutes the primary form of ADP-ribosylation of proteins in response to DNA damage. Serine ADP-ribosylation at Ser-11 (H3S10ADPr) promotes recruitment of CHD1L. H3S10ADPr is mutually exclusive with phosphorylation at Ser-11 (H3S10ph) and impairs acetylation at Lys-10 (H3K9ac).</text>
</comment>
<comment type="PTM">
    <text evidence="2">Serotonylated by TGM2 at Gln-6 (H3Q5ser) during serotonergic neuron differentiation (By similarity). H3Q5ser is associated with trimethylation of Lys-5 (H3K4me3) and enhances general transcription factor IID (TFIID) complex-binding to H3K4me3, thereby facilitating transcription (By similarity).</text>
</comment>
<comment type="PTM">
    <text evidence="2 5">Dopaminylated by TGM2 at Gln-6 (H3Q5dop) in ventral tegmental area (VTA) neurons (By similarity). H3Q5dop mediates neurotransmission-independent role of nuclear dopamine by regulating relapse-related transcriptional plasticity in the reward system (By similarity).</text>
</comment>
<comment type="PTM">
    <text evidence="2">Lactylated in macrophages by EP300/P300 by using lactoyl-CoA directly derived from endogenous or exogenous lactate, leading to stimulates gene transcription.</text>
</comment>
<comment type="miscellaneous">
    <text>This histone is only present in mammals.</text>
</comment>
<comment type="similarity">
    <text evidence="11">Belongs to the histone H3 family.</text>
</comment>
<comment type="caution">
    <text evidence="12">Disulfide bonds have been reported but this may not be physiologically relevant.</text>
</comment>
<sequence length="136" mass="15404">MARTKQTARKSTGGKAPRKQLATKAARKSAPATGGVKKPHRYRPGTVALREIRRYQKSTELLIRKLPFQRLVREIAQDFKTDLRFQSSAVMALQEACEAYLVGLFEDTNLCAIHAKRVTIMPKDIQLARRIRGERA</sequence>
<proteinExistence type="evidence at protein level"/>